<organism>
    <name type="scientific">Dechloromonas aromatica (strain RCB)</name>
    <dbReference type="NCBI Taxonomy" id="159087"/>
    <lineage>
        <taxon>Bacteria</taxon>
        <taxon>Pseudomonadati</taxon>
        <taxon>Pseudomonadota</taxon>
        <taxon>Betaproteobacteria</taxon>
        <taxon>Rhodocyclales</taxon>
        <taxon>Azonexaceae</taxon>
        <taxon>Dechloromonas</taxon>
    </lineage>
</organism>
<evidence type="ECO:0000255" key="1">
    <source>
        <dbReference type="HAMAP-Rule" id="MF_00472"/>
    </source>
</evidence>
<proteinExistence type="inferred from homology"/>
<gene>
    <name evidence="1" type="primary">ubiG</name>
    <name type="ordered locus">Daro_1227</name>
</gene>
<name>UBIG_DECAR</name>
<feature type="chain" id="PRO_0000241708" description="Ubiquinone biosynthesis O-methyltransferase">
    <location>
        <begin position="1"/>
        <end position="232"/>
    </location>
</feature>
<feature type="binding site" evidence="1">
    <location>
        <position position="36"/>
    </location>
    <ligand>
        <name>S-adenosyl-L-methionine</name>
        <dbReference type="ChEBI" id="CHEBI:59789"/>
    </ligand>
</feature>
<feature type="binding site" evidence="1">
    <location>
        <position position="55"/>
    </location>
    <ligand>
        <name>S-adenosyl-L-methionine</name>
        <dbReference type="ChEBI" id="CHEBI:59789"/>
    </ligand>
</feature>
<feature type="binding site" evidence="1">
    <location>
        <position position="76"/>
    </location>
    <ligand>
        <name>S-adenosyl-L-methionine</name>
        <dbReference type="ChEBI" id="CHEBI:59789"/>
    </ligand>
</feature>
<feature type="binding site" evidence="1">
    <location>
        <position position="120"/>
    </location>
    <ligand>
        <name>S-adenosyl-L-methionine</name>
        <dbReference type="ChEBI" id="CHEBI:59789"/>
    </ligand>
</feature>
<sequence length="232" mass="25806">MLNADQAELDKFGELAHRWWDPNSEFKPLHDINPLRIDWIDQAISLAGKRVLDVGCGGGLLSEGMAVRGANVTGIDLSEKPLGVAKLHLLETGQKVDYRKISVEELAEQMPGEFDAVTCLEMLEHVPNPSSVITACARLVKPGGQVFLSTLNRNPKSYLFAVIGAEYVLQMLPKGTHDYARFIKPSELARWAKMANLEPEELVGMSYNPLTKKYSLGKDTSVNYLMRTIRHV</sequence>
<dbReference type="EC" id="2.1.1.222" evidence="1"/>
<dbReference type="EC" id="2.1.1.64" evidence="1"/>
<dbReference type="EMBL" id="CP000089">
    <property type="protein sequence ID" value="AAZ45983.1"/>
    <property type="molecule type" value="Genomic_DNA"/>
</dbReference>
<dbReference type="SMR" id="Q47GP8"/>
<dbReference type="STRING" id="159087.Daro_1227"/>
<dbReference type="KEGG" id="dar:Daro_1227"/>
<dbReference type="eggNOG" id="COG2227">
    <property type="taxonomic scope" value="Bacteria"/>
</dbReference>
<dbReference type="HOGENOM" id="CLU_042432_5_0_4"/>
<dbReference type="OrthoDB" id="9801538at2"/>
<dbReference type="UniPathway" id="UPA00232"/>
<dbReference type="GO" id="GO:0102208">
    <property type="term" value="F:2-polyprenyl-6-hydroxyphenol methylase activity"/>
    <property type="evidence" value="ECO:0007669"/>
    <property type="project" value="UniProtKB-EC"/>
</dbReference>
<dbReference type="GO" id="GO:0061542">
    <property type="term" value="F:3-demethylubiquinol 3-O-methyltransferase activity"/>
    <property type="evidence" value="ECO:0007669"/>
    <property type="project" value="UniProtKB-UniRule"/>
</dbReference>
<dbReference type="GO" id="GO:0010420">
    <property type="term" value="F:polyprenyldihydroxybenzoate methyltransferase activity"/>
    <property type="evidence" value="ECO:0007669"/>
    <property type="project" value="InterPro"/>
</dbReference>
<dbReference type="GO" id="GO:0032259">
    <property type="term" value="P:methylation"/>
    <property type="evidence" value="ECO:0007669"/>
    <property type="project" value="UniProtKB-KW"/>
</dbReference>
<dbReference type="CDD" id="cd02440">
    <property type="entry name" value="AdoMet_MTases"/>
    <property type="match status" value="1"/>
</dbReference>
<dbReference type="FunFam" id="3.40.50.150:FF:000028">
    <property type="entry name" value="Ubiquinone biosynthesis O-methyltransferase"/>
    <property type="match status" value="1"/>
</dbReference>
<dbReference type="Gene3D" id="3.40.50.150">
    <property type="entry name" value="Vaccinia Virus protein VP39"/>
    <property type="match status" value="1"/>
</dbReference>
<dbReference type="HAMAP" id="MF_00472">
    <property type="entry name" value="UbiG"/>
    <property type="match status" value="1"/>
</dbReference>
<dbReference type="InterPro" id="IPR029063">
    <property type="entry name" value="SAM-dependent_MTases_sf"/>
</dbReference>
<dbReference type="InterPro" id="IPR010233">
    <property type="entry name" value="UbiG_MeTrfase"/>
</dbReference>
<dbReference type="NCBIfam" id="TIGR01983">
    <property type="entry name" value="UbiG"/>
    <property type="match status" value="1"/>
</dbReference>
<dbReference type="PANTHER" id="PTHR43464">
    <property type="entry name" value="METHYLTRANSFERASE"/>
    <property type="match status" value="1"/>
</dbReference>
<dbReference type="PANTHER" id="PTHR43464:SF19">
    <property type="entry name" value="UBIQUINONE BIOSYNTHESIS O-METHYLTRANSFERASE, MITOCHONDRIAL"/>
    <property type="match status" value="1"/>
</dbReference>
<dbReference type="Pfam" id="PF13489">
    <property type="entry name" value="Methyltransf_23"/>
    <property type="match status" value="1"/>
</dbReference>
<dbReference type="SUPFAM" id="SSF53335">
    <property type="entry name" value="S-adenosyl-L-methionine-dependent methyltransferases"/>
    <property type="match status" value="1"/>
</dbReference>
<comment type="function">
    <text evidence="1">O-methyltransferase that catalyzes the 2 O-methylation steps in the ubiquinone biosynthetic pathway.</text>
</comment>
<comment type="catalytic activity">
    <reaction evidence="1">
        <text>a 3-demethylubiquinol + S-adenosyl-L-methionine = a ubiquinol + S-adenosyl-L-homocysteine + H(+)</text>
        <dbReference type="Rhea" id="RHEA:44380"/>
        <dbReference type="Rhea" id="RHEA-COMP:9566"/>
        <dbReference type="Rhea" id="RHEA-COMP:10914"/>
        <dbReference type="ChEBI" id="CHEBI:15378"/>
        <dbReference type="ChEBI" id="CHEBI:17976"/>
        <dbReference type="ChEBI" id="CHEBI:57856"/>
        <dbReference type="ChEBI" id="CHEBI:59789"/>
        <dbReference type="ChEBI" id="CHEBI:84422"/>
        <dbReference type="EC" id="2.1.1.64"/>
    </reaction>
</comment>
<comment type="catalytic activity">
    <reaction evidence="1">
        <text>a 3-(all-trans-polyprenyl)benzene-1,2-diol + S-adenosyl-L-methionine = a 2-methoxy-6-(all-trans-polyprenyl)phenol + S-adenosyl-L-homocysteine + H(+)</text>
        <dbReference type="Rhea" id="RHEA:31411"/>
        <dbReference type="Rhea" id="RHEA-COMP:9550"/>
        <dbReference type="Rhea" id="RHEA-COMP:9551"/>
        <dbReference type="ChEBI" id="CHEBI:15378"/>
        <dbReference type="ChEBI" id="CHEBI:57856"/>
        <dbReference type="ChEBI" id="CHEBI:59789"/>
        <dbReference type="ChEBI" id="CHEBI:62729"/>
        <dbReference type="ChEBI" id="CHEBI:62731"/>
        <dbReference type="EC" id="2.1.1.222"/>
    </reaction>
</comment>
<comment type="pathway">
    <text evidence="1">Cofactor biosynthesis; ubiquinone biosynthesis.</text>
</comment>
<comment type="similarity">
    <text evidence="1">Belongs to the methyltransferase superfamily. UbiG/COQ3 family.</text>
</comment>
<keyword id="KW-0489">Methyltransferase</keyword>
<keyword id="KW-0949">S-adenosyl-L-methionine</keyword>
<keyword id="KW-0808">Transferase</keyword>
<keyword id="KW-0831">Ubiquinone biosynthesis</keyword>
<accession>Q47GP8</accession>
<protein>
    <recommendedName>
        <fullName evidence="1">Ubiquinone biosynthesis O-methyltransferase</fullName>
    </recommendedName>
    <alternativeName>
        <fullName evidence="1">2-polyprenyl-6-hydroxyphenol methylase</fullName>
        <ecNumber evidence="1">2.1.1.222</ecNumber>
    </alternativeName>
    <alternativeName>
        <fullName evidence="1">3-demethylubiquinone 3-O-methyltransferase</fullName>
        <ecNumber evidence="1">2.1.1.64</ecNumber>
    </alternativeName>
</protein>
<reference key="1">
    <citation type="journal article" date="2009" name="BMC Genomics">
        <title>Metabolic analysis of the soil microbe Dechloromonas aromatica str. RCB: indications of a surprisingly complex life-style and cryptic anaerobic pathways for aromatic degradation.</title>
        <authorList>
            <person name="Salinero K.K."/>
            <person name="Keller K."/>
            <person name="Feil W.S."/>
            <person name="Feil H."/>
            <person name="Trong S."/>
            <person name="Di Bartolo G."/>
            <person name="Lapidus A."/>
        </authorList>
    </citation>
    <scope>NUCLEOTIDE SEQUENCE [LARGE SCALE GENOMIC DNA]</scope>
    <source>
        <strain>RCB</strain>
    </source>
</reference>